<protein>
    <recommendedName>
        <fullName>Neuroendocrine convertase 2</fullName>
        <shortName>NEC 2</shortName>
        <ecNumber>3.4.21.94</ecNumber>
    </recommendedName>
    <alternativeName>
        <fullName>Prohormone convertase 2</fullName>
    </alternativeName>
    <alternativeName>
        <fullName>Proprotein convertase 2</fullName>
        <shortName>PC2</shortName>
    </alternativeName>
</protein>
<reference key="1">
    <citation type="journal article" date="2000" name="DNA Cell Biol.">
        <title>Molecular cloning demonstrates structural features of homologous bovine prohormone convertases 1 and 2.</title>
        <authorList>
            <person name="Hwang S.-R."/>
            <person name="Ng S.-M."/>
            <person name="Steineckert B."/>
            <person name="Seidah N.G."/>
            <person name="Hook V.Y.H."/>
        </authorList>
    </citation>
    <scope>NUCLEOTIDE SEQUENCE [MRNA]</scope>
    <source>
        <tissue>Adrenal medulla</tissue>
    </source>
</reference>
<organism>
    <name type="scientific">Bos taurus</name>
    <name type="common">Bovine</name>
    <dbReference type="NCBI Taxonomy" id="9913"/>
    <lineage>
        <taxon>Eukaryota</taxon>
        <taxon>Metazoa</taxon>
        <taxon>Chordata</taxon>
        <taxon>Craniata</taxon>
        <taxon>Vertebrata</taxon>
        <taxon>Euteleostomi</taxon>
        <taxon>Mammalia</taxon>
        <taxon>Eutheria</taxon>
        <taxon>Laurasiatheria</taxon>
        <taxon>Artiodactyla</taxon>
        <taxon>Ruminantia</taxon>
        <taxon>Pecora</taxon>
        <taxon>Bovidae</taxon>
        <taxon>Bovinae</taxon>
        <taxon>Bos</taxon>
    </lineage>
</organism>
<evidence type="ECO:0000250" key="1">
    <source>
        <dbReference type="UniProtKB" id="P16519"/>
    </source>
</evidence>
<evidence type="ECO:0000250" key="2">
    <source>
        <dbReference type="UniProtKB" id="P23188"/>
    </source>
</evidence>
<evidence type="ECO:0000255" key="3"/>
<evidence type="ECO:0000255" key="4">
    <source>
        <dbReference type="PROSITE-ProRule" id="PRU01173"/>
    </source>
</evidence>
<evidence type="ECO:0000255" key="5">
    <source>
        <dbReference type="PROSITE-ProRule" id="PRU01240"/>
    </source>
</evidence>
<evidence type="ECO:0000305" key="6"/>
<keyword id="KW-0165">Cleavage on pair of basic residues</keyword>
<keyword id="KW-0968">Cytoplasmic vesicle</keyword>
<keyword id="KW-1015">Disulfide bond</keyword>
<keyword id="KW-0325">Glycoprotein</keyword>
<keyword id="KW-0378">Hydrolase</keyword>
<keyword id="KW-0645">Protease</keyword>
<keyword id="KW-1185">Reference proteome</keyword>
<keyword id="KW-0964">Secreted</keyword>
<keyword id="KW-0720">Serine protease</keyword>
<keyword id="KW-0732">Signal</keyword>
<keyword id="KW-0865">Zymogen</keyword>
<feature type="signal peptide" evidence="3">
    <location>
        <begin position="1"/>
        <end position="25"/>
    </location>
</feature>
<feature type="propeptide" id="PRO_0000244608" evidence="3">
    <location>
        <begin position="26"/>
        <end position="109"/>
    </location>
</feature>
<feature type="chain" id="PRO_0000244609" description="Neuroendocrine convertase 2">
    <location>
        <begin position="110"/>
        <end position="638"/>
    </location>
</feature>
<feature type="domain" description="Peptidase S8" evidence="5">
    <location>
        <begin position="129"/>
        <end position="453"/>
    </location>
</feature>
<feature type="domain" description="P/Homo B" evidence="4">
    <location>
        <begin position="461"/>
        <end position="597"/>
    </location>
</feature>
<feature type="active site" description="Charge relay system" evidence="5">
    <location>
        <position position="167"/>
    </location>
</feature>
<feature type="active site" description="Charge relay system" evidence="5">
    <location>
        <position position="208"/>
    </location>
</feature>
<feature type="active site" description="Charge relay system" evidence="5">
    <location>
        <position position="384"/>
    </location>
</feature>
<feature type="glycosylation site" description="N-linked (GlcNAc...) asparagine" evidence="3">
    <location>
        <position position="375"/>
    </location>
</feature>
<feature type="glycosylation site" description="N-linked (GlcNAc...) asparagine" evidence="3">
    <location>
        <position position="514"/>
    </location>
</feature>
<feature type="glycosylation site" description="N-linked (GlcNAc...) asparagine" evidence="3">
    <location>
        <position position="524"/>
    </location>
</feature>
<feature type="disulfide bond" evidence="2">
    <location>
        <begin position="225"/>
        <end position="376"/>
    </location>
</feature>
<feature type="disulfide bond" evidence="2">
    <location>
        <begin position="317"/>
        <end position="347"/>
    </location>
</feature>
<feature type="disulfide bond" evidence="2">
    <location>
        <begin position="468"/>
        <end position="494"/>
    </location>
</feature>
<comment type="function">
    <text evidence="1">Serine endopeptidase which is involved in the processing of hormone and other protein precursors at sites comprised of pairs of basic amino acid residues. Responsible for the release of glucagon from proglucagon in pancreatic A cells (By similarity).</text>
</comment>
<comment type="catalytic activity">
    <reaction>
        <text>Release of protein hormones and neuropeptides from their precursors, generally by hydrolysis of -Lys-Arg-|- bonds.</text>
        <dbReference type="EC" id="3.4.21.94"/>
    </reaction>
</comment>
<comment type="subcellular location">
    <subcellularLocation>
        <location evidence="1">Cytoplasmic vesicle</location>
        <location evidence="1">Secretory vesicle</location>
    </subcellularLocation>
    <subcellularLocation>
        <location evidence="1">Secreted</location>
    </subcellularLocation>
    <text evidence="1">Localized in the secretion granules.</text>
</comment>
<comment type="similarity">
    <text evidence="6">Belongs to the peptidase S8 family. Furin subfamily.</text>
</comment>
<proteinExistence type="evidence at transcript level"/>
<sequence>MRGGCISQGKAAAGLLFCVMVFASAERPVFTNHFLVELHRGGEEKARQVAAEHGFGVRKLPFAEGLYHFYHNGLAKARRRRSLQHQQQLERDPRVKRALQQEGFNRKKRGYRDINEIDINVNDPLFTKQWYLINTGQADGTPGLDLNVAEAWELGYTGKGVTIGIMDDGIDYLHPDLASNYNAEASYDFSSNDPYPYPRYTDDWSNSHGTRCAGEVSAAANNNICGVGVAYGSKVAGIRMLDQPFMTDIIEASSISHMPQLIDIYSASWGPTDNGKTVDGPRELTLQAMADGVNKGRGGKGSIYVWASGDGGSYDDCNCDGYASSMWTISINSAINDGRTALYDESCSSTLASTFSNGRKRNPEAGVATTDLYGNCTLRHSGTSAAAPEAAGVFALALEANLGLTWRDMQHLTVLTSKRNQLHDEVHQWRRNGVGLEFNHLFGYGVLDAGAMVKMAKDWKTVPERFHCVGGSVQNPEKIPTTGKPVLTLTTDACEGKENFVRYLEHVQAVVTVNATRRGDLNINMTSPMGTKSILLSRRPRGDDAKVGFDKWPFMTTHTWGEDARGTWILELGFVGSAPQKGVLMEWTLMLHGTQSAPYIDQVVRDYQSKLAMSKKEELEEELDEAVQRSLKSILGKD</sequence>
<accession>Q9GLR0</accession>
<name>NEC2_BOVIN</name>
<gene>
    <name type="primary">PCSK2</name>
</gene>
<dbReference type="EC" id="3.4.21.94"/>
<dbReference type="EMBL" id="AF186406">
    <property type="protein sequence ID" value="AAG17018.1"/>
    <property type="molecule type" value="mRNA"/>
</dbReference>
<dbReference type="RefSeq" id="NP_776838.1">
    <property type="nucleotide sequence ID" value="NM_174413.3"/>
</dbReference>
<dbReference type="SMR" id="Q9GLR0"/>
<dbReference type="FunCoup" id="Q9GLR0">
    <property type="interactions" value="747"/>
</dbReference>
<dbReference type="STRING" id="9913.ENSBTAP00000011451"/>
<dbReference type="MEROPS" id="S08.073"/>
<dbReference type="GlyCosmos" id="Q9GLR0">
    <property type="glycosylation" value="3 sites, No reported glycans"/>
</dbReference>
<dbReference type="GlyGen" id="Q9GLR0">
    <property type="glycosylation" value="3 sites"/>
</dbReference>
<dbReference type="PaxDb" id="9913-ENSBTAP00000050841"/>
<dbReference type="GeneID" id="281968"/>
<dbReference type="KEGG" id="bta:281968"/>
<dbReference type="CTD" id="5126"/>
<dbReference type="eggNOG" id="KOG3526">
    <property type="taxonomic scope" value="Eukaryota"/>
</dbReference>
<dbReference type="InParanoid" id="Q9GLR0"/>
<dbReference type="OrthoDB" id="300641at2759"/>
<dbReference type="Proteomes" id="UP000009136">
    <property type="component" value="Unplaced"/>
</dbReference>
<dbReference type="GO" id="GO:0005615">
    <property type="term" value="C:extracellular space"/>
    <property type="evidence" value="ECO:0000250"/>
    <property type="project" value="UniProtKB"/>
</dbReference>
<dbReference type="GO" id="GO:0016020">
    <property type="term" value="C:membrane"/>
    <property type="evidence" value="ECO:0000318"/>
    <property type="project" value="GO_Central"/>
</dbReference>
<dbReference type="GO" id="GO:0043005">
    <property type="term" value="C:neuron projection"/>
    <property type="evidence" value="ECO:0000318"/>
    <property type="project" value="GO_Central"/>
</dbReference>
<dbReference type="GO" id="GO:0030133">
    <property type="term" value="C:transport vesicle"/>
    <property type="evidence" value="ECO:0007669"/>
    <property type="project" value="UniProtKB-SubCell"/>
</dbReference>
<dbReference type="GO" id="GO:0004252">
    <property type="term" value="F:serine-type endopeptidase activity"/>
    <property type="evidence" value="ECO:0000318"/>
    <property type="project" value="GO_Central"/>
</dbReference>
<dbReference type="GO" id="GO:0007399">
    <property type="term" value="P:nervous system development"/>
    <property type="evidence" value="ECO:0000250"/>
    <property type="project" value="AgBase"/>
</dbReference>
<dbReference type="GO" id="GO:0016486">
    <property type="term" value="P:peptide hormone processing"/>
    <property type="evidence" value="ECO:0000250"/>
    <property type="project" value="UniProtKB"/>
</dbReference>
<dbReference type="GO" id="GO:0016540">
    <property type="term" value="P:protein autoprocessing"/>
    <property type="evidence" value="ECO:0000250"/>
    <property type="project" value="AgBase"/>
</dbReference>
<dbReference type="GO" id="GO:0006508">
    <property type="term" value="P:proteolysis"/>
    <property type="evidence" value="ECO:0000250"/>
    <property type="project" value="AgBase"/>
</dbReference>
<dbReference type="CDD" id="cd04059">
    <property type="entry name" value="Peptidases_S8_Protein_convertases_Kexins_Furin-like"/>
    <property type="match status" value="1"/>
</dbReference>
<dbReference type="FunFam" id="2.60.120.260:FF:000020">
    <property type="entry name" value="neuroendocrine convertase 2"/>
    <property type="match status" value="1"/>
</dbReference>
<dbReference type="FunFam" id="3.30.70.850:FF:000003">
    <property type="entry name" value="neuroendocrine convertase 2 isoform X1"/>
    <property type="match status" value="1"/>
</dbReference>
<dbReference type="FunFam" id="3.40.50.200:FF:000004">
    <property type="entry name" value="Proprotein convertase type 2"/>
    <property type="match status" value="1"/>
</dbReference>
<dbReference type="Gene3D" id="2.60.120.260">
    <property type="entry name" value="Galactose-binding domain-like"/>
    <property type="match status" value="1"/>
</dbReference>
<dbReference type="Gene3D" id="3.30.70.850">
    <property type="entry name" value="Peptidase S8, pro-domain"/>
    <property type="match status" value="1"/>
</dbReference>
<dbReference type="Gene3D" id="3.40.50.200">
    <property type="entry name" value="Peptidase S8/S53 domain"/>
    <property type="match status" value="1"/>
</dbReference>
<dbReference type="InterPro" id="IPR008979">
    <property type="entry name" value="Galactose-bd-like_sf"/>
</dbReference>
<dbReference type="InterPro" id="IPR034182">
    <property type="entry name" value="Kexin/furin"/>
</dbReference>
<dbReference type="InterPro" id="IPR002884">
    <property type="entry name" value="P_dom"/>
</dbReference>
<dbReference type="InterPro" id="IPR000209">
    <property type="entry name" value="Peptidase_S8/S53_dom"/>
</dbReference>
<dbReference type="InterPro" id="IPR036852">
    <property type="entry name" value="Peptidase_S8/S53_dom_sf"/>
</dbReference>
<dbReference type="InterPro" id="IPR023827">
    <property type="entry name" value="Peptidase_S8_Asp-AS"/>
</dbReference>
<dbReference type="InterPro" id="IPR022398">
    <property type="entry name" value="Peptidase_S8_His-AS"/>
</dbReference>
<dbReference type="InterPro" id="IPR023828">
    <property type="entry name" value="Peptidase_S8_Ser-AS"/>
</dbReference>
<dbReference type="InterPro" id="IPR015500">
    <property type="entry name" value="Peptidase_S8_subtilisin-rel"/>
</dbReference>
<dbReference type="InterPro" id="IPR032815">
    <property type="entry name" value="S8_pro-domain"/>
</dbReference>
<dbReference type="InterPro" id="IPR038466">
    <property type="entry name" value="S8_pro-domain_sf"/>
</dbReference>
<dbReference type="PANTHER" id="PTHR42884:SF13">
    <property type="entry name" value="NEUROENDOCRINE CONVERTASE 2"/>
    <property type="match status" value="1"/>
</dbReference>
<dbReference type="PANTHER" id="PTHR42884">
    <property type="entry name" value="PROPROTEIN CONVERTASE SUBTILISIN/KEXIN-RELATED"/>
    <property type="match status" value="1"/>
</dbReference>
<dbReference type="Pfam" id="PF01483">
    <property type="entry name" value="P_proprotein"/>
    <property type="match status" value="1"/>
</dbReference>
<dbReference type="Pfam" id="PF00082">
    <property type="entry name" value="Peptidase_S8"/>
    <property type="match status" value="1"/>
</dbReference>
<dbReference type="Pfam" id="PF16470">
    <property type="entry name" value="S8_pro-domain"/>
    <property type="match status" value="1"/>
</dbReference>
<dbReference type="PRINTS" id="PR00723">
    <property type="entry name" value="SUBTILISIN"/>
</dbReference>
<dbReference type="SUPFAM" id="SSF49785">
    <property type="entry name" value="Galactose-binding domain-like"/>
    <property type="match status" value="1"/>
</dbReference>
<dbReference type="SUPFAM" id="SSF54897">
    <property type="entry name" value="Protease propeptides/inhibitors"/>
    <property type="match status" value="1"/>
</dbReference>
<dbReference type="SUPFAM" id="SSF52743">
    <property type="entry name" value="Subtilisin-like"/>
    <property type="match status" value="1"/>
</dbReference>
<dbReference type="PROSITE" id="PS51829">
    <property type="entry name" value="P_HOMO_B"/>
    <property type="match status" value="1"/>
</dbReference>
<dbReference type="PROSITE" id="PS51892">
    <property type="entry name" value="SUBTILASE"/>
    <property type="match status" value="1"/>
</dbReference>
<dbReference type="PROSITE" id="PS00136">
    <property type="entry name" value="SUBTILASE_ASP"/>
    <property type="match status" value="1"/>
</dbReference>
<dbReference type="PROSITE" id="PS00137">
    <property type="entry name" value="SUBTILASE_HIS"/>
    <property type="match status" value="1"/>
</dbReference>
<dbReference type="PROSITE" id="PS00138">
    <property type="entry name" value="SUBTILASE_SER"/>
    <property type="match status" value="1"/>
</dbReference>